<sequence>MWFKNLLTYRLTQEVPFEPEALEAALASKPARPCASQELTTYGFVAPFGKGEDAPLVHVSGEYLLIAARKEERILPSSVVNDAVKEKVEEIETEQMRKVYKKERDQIKDEIIQAFLPRAFIRRSMIFAAIAPRLGVILVNSASAKRAEDLLSTLREVMGSLPVRPATVKIAPVATMTDWVKSQQAAEGFYVLDECELRDTAEDGGIVRCKRQDLTGEEIQLHLSTGKVVTQLALAWQDKLSFILDDKMVIKRLKFEELLQEQAEQDGGDEAAQQFDASFQLMMMTFAEFLPVLFEALGGEEIPQGV</sequence>
<gene>
    <name evidence="1" type="primary">rdgC</name>
    <name type="ordered locus">PP_1702</name>
</gene>
<reference key="1">
    <citation type="journal article" date="2002" name="Environ. Microbiol.">
        <title>Complete genome sequence and comparative analysis of the metabolically versatile Pseudomonas putida KT2440.</title>
        <authorList>
            <person name="Nelson K.E."/>
            <person name="Weinel C."/>
            <person name="Paulsen I.T."/>
            <person name="Dodson R.J."/>
            <person name="Hilbert H."/>
            <person name="Martins dos Santos V.A.P."/>
            <person name="Fouts D.E."/>
            <person name="Gill S.R."/>
            <person name="Pop M."/>
            <person name="Holmes M."/>
            <person name="Brinkac L.M."/>
            <person name="Beanan M.J."/>
            <person name="DeBoy R.T."/>
            <person name="Daugherty S.C."/>
            <person name="Kolonay J.F."/>
            <person name="Madupu R."/>
            <person name="Nelson W.C."/>
            <person name="White O."/>
            <person name="Peterson J.D."/>
            <person name="Khouri H.M."/>
            <person name="Hance I."/>
            <person name="Chris Lee P."/>
            <person name="Holtzapple E.K."/>
            <person name="Scanlan D."/>
            <person name="Tran K."/>
            <person name="Moazzez A."/>
            <person name="Utterback T.R."/>
            <person name="Rizzo M."/>
            <person name="Lee K."/>
            <person name="Kosack D."/>
            <person name="Moestl D."/>
            <person name="Wedler H."/>
            <person name="Lauber J."/>
            <person name="Stjepandic D."/>
            <person name="Hoheisel J."/>
            <person name="Straetz M."/>
            <person name="Heim S."/>
            <person name="Kiewitz C."/>
            <person name="Eisen J.A."/>
            <person name="Timmis K.N."/>
            <person name="Duesterhoeft A."/>
            <person name="Tuemmler B."/>
            <person name="Fraser C.M."/>
        </authorList>
    </citation>
    <scope>NUCLEOTIDE SEQUENCE [LARGE SCALE GENOMIC DNA]</scope>
    <source>
        <strain>ATCC 47054 / DSM 6125 / CFBP 8728 / NCIMB 11950 / KT2440</strain>
    </source>
</reference>
<proteinExistence type="inferred from homology"/>
<protein>
    <recommendedName>
        <fullName evidence="1">Recombination-associated protein RdgC</fullName>
    </recommendedName>
</protein>
<feature type="chain" id="PRO_0000211746" description="Recombination-associated protein RdgC">
    <location>
        <begin position="1"/>
        <end position="306"/>
    </location>
</feature>
<organism>
    <name type="scientific">Pseudomonas putida (strain ATCC 47054 / DSM 6125 / CFBP 8728 / NCIMB 11950 / KT2440)</name>
    <dbReference type="NCBI Taxonomy" id="160488"/>
    <lineage>
        <taxon>Bacteria</taxon>
        <taxon>Pseudomonadati</taxon>
        <taxon>Pseudomonadota</taxon>
        <taxon>Gammaproteobacteria</taxon>
        <taxon>Pseudomonadales</taxon>
        <taxon>Pseudomonadaceae</taxon>
        <taxon>Pseudomonas</taxon>
    </lineage>
</organism>
<keyword id="KW-0963">Cytoplasm</keyword>
<keyword id="KW-0233">DNA recombination</keyword>
<keyword id="KW-1185">Reference proteome</keyword>
<evidence type="ECO:0000255" key="1">
    <source>
        <dbReference type="HAMAP-Rule" id="MF_00194"/>
    </source>
</evidence>
<accession>Q88M72</accession>
<dbReference type="EMBL" id="AE015451">
    <property type="protein sequence ID" value="AAN67323.1"/>
    <property type="molecule type" value="Genomic_DNA"/>
</dbReference>
<dbReference type="RefSeq" id="NP_743859.1">
    <property type="nucleotide sequence ID" value="NC_002947.4"/>
</dbReference>
<dbReference type="RefSeq" id="WP_003252510.1">
    <property type="nucleotide sequence ID" value="NZ_CP169744.1"/>
</dbReference>
<dbReference type="SMR" id="Q88M72"/>
<dbReference type="STRING" id="160488.PP_1702"/>
<dbReference type="PaxDb" id="160488-PP_1702"/>
<dbReference type="GeneID" id="83681822"/>
<dbReference type="KEGG" id="ppu:PP_1702"/>
<dbReference type="PATRIC" id="fig|160488.4.peg.1796"/>
<dbReference type="eggNOG" id="COG2974">
    <property type="taxonomic scope" value="Bacteria"/>
</dbReference>
<dbReference type="HOGENOM" id="CLU_052038_1_1_6"/>
<dbReference type="OrthoDB" id="5290530at2"/>
<dbReference type="PhylomeDB" id="Q88M72"/>
<dbReference type="BioCyc" id="PPUT160488:G1G01-1800-MONOMER"/>
<dbReference type="Proteomes" id="UP000000556">
    <property type="component" value="Chromosome"/>
</dbReference>
<dbReference type="GO" id="GO:0043590">
    <property type="term" value="C:bacterial nucleoid"/>
    <property type="evidence" value="ECO:0007669"/>
    <property type="project" value="TreeGrafter"/>
</dbReference>
<dbReference type="GO" id="GO:0005737">
    <property type="term" value="C:cytoplasm"/>
    <property type="evidence" value="ECO:0007669"/>
    <property type="project" value="UniProtKB-UniRule"/>
</dbReference>
<dbReference type="GO" id="GO:0003690">
    <property type="term" value="F:double-stranded DNA binding"/>
    <property type="evidence" value="ECO:0007669"/>
    <property type="project" value="TreeGrafter"/>
</dbReference>
<dbReference type="GO" id="GO:0006310">
    <property type="term" value="P:DNA recombination"/>
    <property type="evidence" value="ECO:0007669"/>
    <property type="project" value="UniProtKB-UniRule"/>
</dbReference>
<dbReference type="GO" id="GO:0000018">
    <property type="term" value="P:regulation of DNA recombination"/>
    <property type="evidence" value="ECO:0007669"/>
    <property type="project" value="TreeGrafter"/>
</dbReference>
<dbReference type="HAMAP" id="MF_00194">
    <property type="entry name" value="RdgC"/>
    <property type="match status" value="1"/>
</dbReference>
<dbReference type="InterPro" id="IPR007476">
    <property type="entry name" value="RdgC"/>
</dbReference>
<dbReference type="NCBIfam" id="NF001461">
    <property type="entry name" value="PRK00321.1-2"/>
    <property type="match status" value="1"/>
</dbReference>
<dbReference type="NCBIfam" id="NF001462">
    <property type="entry name" value="PRK00321.1-3"/>
    <property type="match status" value="1"/>
</dbReference>
<dbReference type="NCBIfam" id="NF001464">
    <property type="entry name" value="PRK00321.1-5"/>
    <property type="match status" value="1"/>
</dbReference>
<dbReference type="PANTHER" id="PTHR38103">
    <property type="entry name" value="RECOMBINATION-ASSOCIATED PROTEIN RDGC"/>
    <property type="match status" value="1"/>
</dbReference>
<dbReference type="PANTHER" id="PTHR38103:SF1">
    <property type="entry name" value="RECOMBINATION-ASSOCIATED PROTEIN RDGC"/>
    <property type="match status" value="1"/>
</dbReference>
<dbReference type="Pfam" id="PF04381">
    <property type="entry name" value="RdgC"/>
    <property type="match status" value="1"/>
</dbReference>
<comment type="function">
    <text evidence="1">May be involved in recombination.</text>
</comment>
<comment type="subcellular location">
    <subcellularLocation>
        <location evidence="1">Cytoplasm</location>
        <location evidence="1">Nucleoid</location>
    </subcellularLocation>
</comment>
<comment type="similarity">
    <text evidence="1">Belongs to the RdgC family.</text>
</comment>
<name>RDGC_PSEPK</name>